<name>RS15_THEMA</name>
<protein>
    <recommendedName>
        <fullName evidence="1">Small ribosomal subunit protein uS15</fullName>
    </recommendedName>
    <alternativeName>
        <fullName evidence="2">30S ribosomal protein S15</fullName>
    </alternativeName>
</protein>
<reference key="1">
    <citation type="journal article" date="1999" name="Nature">
        <title>Evidence for lateral gene transfer between Archaea and Bacteria from genome sequence of Thermotoga maritima.</title>
        <authorList>
            <person name="Nelson K.E."/>
            <person name="Clayton R.A."/>
            <person name="Gill S.R."/>
            <person name="Gwinn M.L."/>
            <person name="Dodson R.J."/>
            <person name="Haft D.H."/>
            <person name="Hickey E.K."/>
            <person name="Peterson J.D."/>
            <person name="Nelson W.C."/>
            <person name="Ketchum K.A."/>
            <person name="McDonald L.A."/>
            <person name="Utterback T.R."/>
            <person name="Malek J.A."/>
            <person name="Linher K.D."/>
            <person name="Garrett M.M."/>
            <person name="Stewart A.M."/>
            <person name="Cotton M.D."/>
            <person name="Pratt M.S."/>
            <person name="Phillips C.A."/>
            <person name="Richardson D.L."/>
            <person name="Heidelberg J.F."/>
            <person name="Sutton G.G."/>
            <person name="Fleischmann R.D."/>
            <person name="Eisen J.A."/>
            <person name="White O."/>
            <person name="Salzberg S.L."/>
            <person name="Smith H.O."/>
            <person name="Venter J.C."/>
            <person name="Fraser C.M."/>
        </authorList>
    </citation>
    <scope>NUCLEOTIDE SEQUENCE [LARGE SCALE GENOMIC DNA]</scope>
    <source>
        <strain>ATCC 43589 / DSM 3109 / JCM 10099 / NBRC 100826 / MSB8</strain>
    </source>
</reference>
<dbReference type="EMBL" id="AE000512">
    <property type="protein sequence ID" value="AAD36415.1"/>
    <property type="molecule type" value="Genomic_DNA"/>
</dbReference>
<dbReference type="PIR" id="G72266">
    <property type="entry name" value="G72266"/>
</dbReference>
<dbReference type="RefSeq" id="NP_229145.1">
    <property type="nucleotide sequence ID" value="NC_000853.1"/>
</dbReference>
<dbReference type="SMR" id="Q9X165"/>
<dbReference type="FunCoup" id="Q9X165">
    <property type="interactions" value="338"/>
</dbReference>
<dbReference type="STRING" id="243274.TM_1344"/>
<dbReference type="PaxDb" id="243274-THEMA_07620"/>
<dbReference type="EnsemblBacteria" id="AAD36415">
    <property type="protein sequence ID" value="AAD36415"/>
    <property type="gene ID" value="TM_1344"/>
</dbReference>
<dbReference type="KEGG" id="tma:TM1344"/>
<dbReference type="KEGG" id="tmi:THEMA_07620"/>
<dbReference type="KEGG" id="tmm:Tmari_1351"/>
<dbReference type="KEGG" id="tmw:THMA_1369"/>
<dbReference type="eggNOG" id="COG0184">
    <property type="taxonomic scope" value="Bacteria"/>
</dbReference>
<dbReference type="InParanoid" id="Q9X165"/>
<dbReference type="OrthoDB" id="9799262at2"/>
<dbReference type="Proteomes" id="UP000008183">
    <property type="component" value="Chromosome"/>
</dbReference>
<dbReference type="GO" id="GO:0022627">
    <property type="term" value="C:cytosolic small ribosomal subunit"/>
    <property type="evidence" value="ECO:0000318"/>
    <property type="project" value="GO_Central"/>
</dbReference>
<dbReference type="GO" id="GO:0019843">
    <property type="term" value="F:rRNA binding"/>
    <property type="evidence" value="ECO:0007669"/>
    <property type="project" value="UniProtKB-UniRule"/>
</dbReference>
<dbReference type="GO" id="GO:0003735">
    <property type="term" value="F:structural constituent of ribosome"/>
    <property type="evidence" value="ECO:0007669"/>
    <property type="project" value="InterPro"/>
</dbReference>
<dbReference type="GO" id="GO:0006412">
    <property type="term" value="P:translation"/>
    <property type="evidence" value="ECO:0007669"/>
    <property type="project" value="UniProtKB-UniRule"/>
</dbReference>
<dbReference type="CDD" id="cd00353">
    <property type="entry name" value="Ribosomal_S15p_S13e"/>
    <property type="match status" value="1"/>
</dbReference>
<dbReference type="FunFam" id="1.10.287.10:FF:000002">
    <property type="entry name" value="30S ribosomal protein S15"/>
    <property type="match status" value="1"/>
</dbReference>
<dbReference type="Gene3D" id="6.10.250.3130">
    <property type="match status" value="1"/>
</dbReference>
<dbReference type="Gene3D" id="1.10.287.10">
    <property type="entry name" value="S15/NS1, RNA-binding"/>
    <property type="match status" value="1"/>
</dbReference>
<dbReference type="HAMAP" id="MF_01343_B">
    <property type="entry name" value="Ribosomal_uS15_B"/>
    <property type="match status" value="1"/>
</dbReference>
<dbReference type="InterPro" id="IPR000589">
    <property type="entry name" value="Ribosomal_uS15"/>
</dbReference>
<dbReference type="InterPro" id="IPR005290">
    <property type="entry name" value="Ribosomal_uS15_bac-type"/>
</dbReference>
<dbReference type="InterPro" id="IPR009068">
    <property type="entry name" value="uS15_NS1_RNA-bd_sf"/>
</dbReference>
<dbReference type="NCBIfam" id="TIGR00952">
    <property type="entry name" value="S15_bact"/>
    <property type="match status" value="1"/>
</dbReference>
<dbReference type="PANTHER" id="PTHR23321">
    <property type="entry name" value="RIBOSOMAL PROTEIN S15, BACTERIAL AND ORGANELLAR"/>
    <property type="match status" value="1"/>
</dbReference>
<dbReference type="PANTHER" id="PTHR23321:SF26">
    <property type="entry name" value="SMALL RIBOSOMAL SUBUNIT PROTEIN US15M"/>
    <property type="match status" value="1"/>
</dbReference>
<dbReference type="Pfam" id="PF00312">
    <property type="entry name" value="Ribosomal_S15"/>
    <property type="match status" value="1"/>
</dbReference>
<dbReference type="SMART" id="SM01387">
    <property type="entry name" value="Ribosomal_S15"/>
    <property type="match status" value="1"/>
</dbReference>
<dbReference type="SUPFAM" id="SSF47060">
    <property type="entry name" value="S15/NS1 RNA-binding domain"/>
    <property type="match status" value="1"/>
</dbReference>
<dbReference type="PROSITE" id="PS00362">
    <property type="entry name" value="RIBOSOMAL_S15"/>
    <property type="match status" value="1"/>
</dbReference>
<feature type="chain" id="PRO_0000115571" description="Small ribosomal subunit protein uS15">
    <location>
        <begin position="1"/>
        <end position="90"/>
    </location>
</feature>
<sequence length="90" mass="10808">MVSLDPEKKNEIIKEFQIHENDTGSVEVQIALLTARIKHLTEHLRKHPKDFHSRRGLMKMIGRRRKMLKYLRHKKPEVYRELIAKLGIRK</sequence>
<proteinExistence type="inferred from homology"/>
<organism>
    <name type="scientific">Thermotoga maritima (strain ATCC 43589 / DSM 3109 / JCM 10099 / NBRC 100826 / MSB8)</name>
    <dbReference type="NCBI Taxonomy" id="243274"/>
    <lineage>
        <taxon>Bacteria</taxon>
        <taxon>Thermotogati</taxon>
        <taxon>Thermotogota</taxon>
        <taxon>Thermotogae</taxon>
        <taxon>Thermotogales</taxon>
        <taxon>Thermotogaceae</taxon>
        <taxon>Thermotoga</taxon>
    </lineage>
</organism>
<comment type="function">
    <text evidence="1">One of the primary rRNA binding proteins, it binds directly to 16S rRNA where it helps nucleate assembly of the platform of the 30S subunit by binding and bridging several RNA helices of the 16S rRNA.</text>
</comment>
<comment type="function">
    <text evidence="1">Forms an intersubunit bridge (bridge B4) with the 23S rRNA of the 50S subunit in the ribosome.</text>
</comment>
<comment type="subunit">
    <text evidence="1">Part of the 30S ribosomal subunit. Forms a bridge to the 50S subunit in the 70S ribosome, contacting the 23S rRNA.</text>
</comment>
<comment type="similarity">
    <text evidence="1">Belongs to the universal ribosomal protein uS15 family.</text>
</comment>
<gene>
    <name evidence="1" type="primary">rpsO</name>
    <name type="ordered locus">TM_1344</name>
</gene>
<evidence type="ECO:0000255" key="1">
    <source>
        <dbReference type="HAMAP-Rule" id="MF_01343"/>
    </source>
</evidence>
<evidence type="ECO:0000305" key="2"/>
<keyword id="KW-1185">Reference proteome</keyword>
<keyword id="KW-0687">Ribonucleoprotein</keyword>
<keyword id="KW-0689">Ribosomal protein</keyword>
<keyword id="KW-0694">RNA-binding</keyword>
<keyword id="KW-0699">rRNA-binding</keyword>
<accession>Q9X165</accession>